<name>VP47_NPVOP</name>
<accession>O10300</accession>
<sequence>MANVSMFAQSLHYTTQFLPAVCRAHDDVLLRYNLYISGAGAQLPRRVTRTVQIDADGFVRFVFDVKVFHLERLTVVERATAGDLDDYVEVTRPELSAHDAAIFKLVCRDRWCKGDAQRLRRILQQPRVDNLIKFACNVIWERGYEDHYTIGQQLSILITTKLIQSGLDFKHQPDTAAPASVRGWQDETFEKYLLSLSSVNEIIKRHVFSKKYICLEVAAAHWRSVVQALQDEGFKLAFNAHTPHVLLICVDDDKNSMVYMLKLAHLLQTRVVNLLFATDVEFYMRANHFTFYVYNSLKFYYYCLKNKFAFESNDKMLMFLLYTIVSLEWFNKGHLNSFTLEKSELYNPLELATRRLNSIKRAAQQNRVVECDSEIGVDYVRGKRVRTGTHYGQRAVQFE</sequence>
<evidence type="ECO:0000250" key="1"/>
<evidence type="ECO:0000305" key="2"/>
<dbReference type="EMBL" id="U75930">
    <property type="protein sequence ID" value="AAC59044.1"/>
    <property type="molecule type" value="Genomic_DNA"/>
</dbReference>
<dbReference type="RefSeq" id="NP_046201.1">
    <property type="nucleotide sequence ID" value="NC_001875.2"/>
</dbReference>
<dbReference type="KEGG" id="vg:912087"/>
<dbReference type="OrthoDB" id="6161at10239"/>
<dbReference type="Proteomes" id="UP000009248">
    <property type="component" value="Genome"/>
</dbReference>
<dbReference type="GO" id="GO:0042025">
    <property type="term" value="C:host cell nucleus"/>
    <property type="evidence" value="ECO:0007669"/>
    <property type="project" value="UniProtKB-SubCell"/>
</dbReference>
<dbReference type="GO" id="GO:0046782">
    <property type="term" value="P:regulation of viral transcription"/>
    <property type="evidence" value="ECO:0007669"/>
    <property type="project" value="InterPro"/>
</dbReference>
<dbReference type="InterPro" id="IPR007799">
    <property type="entry name" value="Baculo_p47"/>
</dbReference>
<dbReference type="Pfam" id="PF05112">
    <property type="entry name" value="Baculo_p47"/>
    <property type="match status" value="1"/>
</dbReference>
<feature type="chain" id="PRO_0000132909" description="Viral transcription regulator p47">
    <location>
        <begin position="1"/>
        <end position="399"/>
    </location>
</feature>
<organism>
    <name type="scientific">Orgyia pseudotsugata multicapsid polyhedrosis virus</name>
    <name type="common">OpMNPV</name>
    <dbReference type="NCBI Taxonomy" id="262177"/>
    <lineage>
        <taxon>Viruses</taxon>
        <taxon>Viruses incertae sedis</taxon>
        <taxon>Naldaviricetes</taxon>
        <taxon>Lefavirales</taxon>
        <taxon>Baculoviridae</taxon>
        <taxon>Alphabaculovirus</taxon>
        <taxon>Alphabaculovirus orpseudotsugatae</taxon>
    </lineage>
</organism>
<comment type="function">
    <text evidence="1">It is involved in regulating viral transcription at late times postinfection.</text>
</comment>
<comment type="subcellular location">
    <subcellularLocation>
        <location evidence="1">Host nucleus</location>
    </subcellularLocation>
</comment>
<comment type="similarity">
    <text evidence="2">Belongs to the baculoviridae p47 family.</text>
</comment>
<organismHost>
    <name type="scientific">Orgyia pseudotsugata</name>
    <name type="common">Douglas-fir tussock moth</name>
    <dbReference type="NCBI Taxonomy" id="33414"/>
</organismHost>
<gene>
    <name type="primary">P47</name>
    <name type="ORF">ORF45</name>
</gene>
<reference key="1">
    <citation type="journal article" date="1997" name="Virology">
        <title>The sequence of the Orgyia pseudotsugata multinucleocapsid nuclear polyhedrosis virus genome.</title>
        <authorList>
            <person name="Ahrens C.H."/>
            <person name="Russell R.R."/>
            <person name="Funk C.J."/>
            <person name="Evans J."/>
            <person name="Harwood S."/>
            <person name="Rohrmann G.F."/>
        </authorList>
    </citation>
    <scope>NUCLEOTIDE SEQUENCE [LARGE SCALE GENOMIC DNA]</scope>
</reference>
<keyword id="KW-1048">Host nucleus</keyword>
<keyword id="KW-1185">Reference proteome</keyword>
<keyword id="KW-0804">Transcription</keyword>
<keyword id="KW-0805">Transcription regulation</keyword>
<protein>
    <recommendedName>
        <fullName>Viral transcription regulator p47</fullName>
    </recommendedName>
</protein>
<proteinExistence type="inferred from homology"/>